<reference key="1">
    <citation type="journal article" date="2005" name="Arch. Microbiol.">
        <title>The genome sequence of an anaerobic aromatic-degrading denitrifying bacterium, strain EbN1.</title>
        <authorList>
            <person name="Rabus R."/>
            <person name="Kube M."/>
            <person name="Heider J."/>
            <person name="Beck A."/>
            <person name="Heitmann K."/>
            <person name="Widdel F."/>
            <person name="Reinhardt R."/>
        </authorList>
    </citation>
    <scope>NUCLEOTIDE SEQUENCE [LARGE SCALE GENOMIC DNA]</scope>
    <source>
        <strain>DSM 19018 / LMG 30748 / EbN1</strain>
    </source>
</reference>
<dbReference type="EC" id="2.6.1.9" evidence="1"/>
<dbReference type="EMBL" id="CR555306">
    <property type="protein sequence ID" value="CAI06820.1"/>
    <property type="molecule type" value="Genomic_DNA"/>
</dbReference>
<dbReference type="RefSeq" id="WP_011236548.1">
    <property type="nucleotide sequence ID" value="NC_006513.1"/>
</dbReference>
<dbReference type="SMR" id="Q5P791"/>
<dbReference type="STRING" id="76114.ebA1297"/>
<dbReference type="KEGG" id="eba:ebA1297"/>
<dbReference type="eggNOG" id="COG0079">
    <property type="taxonomic scope" value="Bacteria"/>
</dbReference>
<dbReference type="HOGENOM" id="CLU_017584_3_0_4"/>
<dbReference type="OrthoDB" id="9809616at2"/>
<dbReference type="UniPathway" id="UPA00031">
    <property type="reaction ID" value="UER00012"/>
</dbReference>
<dbReference type="Proteomes" id="UP000006552">
    <property type="component" value="Chromosome"/>
</dbReference>
<dbReference type="GO" id="GO:0004400">
    <property type="term" value="F:histidinol-phosphate transaminase activity"/>
    <property type="evidence" value="ECO:0007669"/>
    <property type="project" value="UniProtKB-UniRule"/>
</dbReference>
<dbReference type="GO" id="GO:0030170">
    <property type="term" value="F:pyridoxal phosphate binding"/>
    <property type="evidence" value="ECO:0007669"/>
    <property type="project" value="InterPro"/>
</dbReference>
<dbReference type="GO" id="GO:0000105">
    <property type="term" value="P:L-histidine biosynthetic process"/>
    <property type="evidence" value="ECO:0007669"/>
    <property type="project" value="UniProtKB-UniRule"/>
</dbReference>
<dbReference type="CDD" id="cd00609">
    <property type="entry name" value="AAT_like"/>
    <property type="match status" value="1"/>
</dbReference>
<dbReference type="Gene3D" id="3.90.1150.10">
    <property type="entry name" value="Aspartate Aminotransferase, domain 1"/>
    <property type="match status" value="1"/>
</dbReference>
<dbReference type="Gene3D" id="3.40.640.10">
    <property type="entry name" value="Type I PLP-dependent aspartate aminotransferase-like (Major domain)"/>
    <property type="match status" value="1"/>
</dbReference>
<dbReference type="HAMAP" id="MF_01023">
    <property type="entry name" value="HisC_aminotrans_2"/>
    <property type="match status" value="1"/>
</dbReference>
<dbReference type="InterPro" id="IPR001917">
    <property type="entry name" value="Aminotrans_II_pyridoxalP_BS"/>
</dbReference>
<dbReference type="InterPro" id="IPR004839">
    <property type="entry name" value="Aminotransferase_I/II_large"/>
</dbReference>
<dbReference type="InterPro" id="IPR005861">
    <property type="entry name" value="HisP_aminotrans"/>
</dbReference>
<dbReference type="InterPro" id="IPR050106">
    <property type="entry name" value="HistidinolP_aminotransfase"/>
</dbReference>
<dbReference type="InterPro" id="IPR015424">
    <property type="entry name" value="PyrdxlP-dep_Trfase"/>
</dbReference>
<dbReference type="InterPro" id="IPR015421">
    <property type="entry name" value="PyrdxlP-dep_Trfase_major"/>
</dbReference>
<dbReference type="InterPro" id="IPR015422">
    <property type="entry name" value="PyrdxlP-dep_Trfase_small"/>
</dbReference>
<dbReference type="NCBIfam" id="TIGR01141">
    <property type="entry name" value="hisC"/>
    <property type="match status" value="1"/>
</dbReference>
<dbReference type="PANTHER" id="PTHR43643:SF3">
    <property type="entry name" value="HISTIDINOL-PHOSPHATE AMINOTRANSFERASE"/>
    <property type="match status" value="1"/>
</dbReference>
<dbReference type="PANTHER" id="PTHR43643">
    <property type="entry name" value="HISTIDINOL-PHOSPHATE AMINOTRANSFERASE 2"/>
    <property type="match status" value="1"/>
</dbReference>
<dbReference type="Pfam" id="PF00155">
    <property type="entry name" value="Aminotran_1_2"/>
    <property type="match status" value="1"/>
</dbReference>
<dbReference type="SUPFAM" id="SSF53383">
    <property type="entry name" value="PLP-dependent transferases"/>
    <property type="match status" value="1"/>
</dbReference>
<dbReference type="PROSITE" id="PS00599">
    <property type="entry name" value="AA_TRANSFER_CLASS_2"/>
    <property type="match status" value="1"/>
</dbReference>
<evidence type="ECO:0000255" key="1">
    <source>
        <dbReference type="HAMAP-Rule" id="MF_01023"/>
    </source>
</evidence>
<comment type="catalytic activity">
    <reaction evidence="1">
        <text>L-histidinol phosphate + 2-oxoglutarate = 3-(imidazol-4-yl)-2-oxopropyl phosphate + L-glutamate</text>
        <dbReference type="Rhea" id="RHEA:23744"/>
        <dbReference type="ChEBI" id="CHEBI:16810"/>
        <dbReference type="ChEBI" id="CHEBI:29985"/>
        <dbReference type="ChEBI" id="CHEBI:57766"/>
        <dbReference type="ChEBI" id="CHEBI:57980"/>
        <dbReference type="EC" id="2.6.1.9"/>
    </reaction>
</comment>
<comment type="cofactor">
    <cofactor evidence="1">
        <name>pyridoxal 5'-phosphate</name>
        <dbReference type="ChEBI" id="CHEBI:597326"/>
    </cofactor>
</comment>
<comment type="pathway">
    <text evidence="1">Amino-acid biosynthesis; L-histidine biosynthesis; L-histidine from 5-phospho-alpha-D-ribose 1-diphosphate: step 7/9.</text>
</comment>
<comment type="subunit">
    <text evidence="1">Homodimer.</text>
</comment>
<comment type="similarity">
    <text evidence="1">Belongs to the class-II pyridoxal-phosphate-dependent aminotransferase family. Histidinol-phosphate aminotransferase subfamily.</text>
</comment>
<feature type="chain" id="PRO_0000153296" description="Histidinol-phosphate aminotransferase">
    <location>
        <begin position="1"/>
        <end position="356"/>
    </location>
</feature>
<feature type="modified residue" description="N6-(pyridoxal phosphate)lysine" evidence="1">
    <location>
        <position position="214"/>
    </location>
</feature>
<keyword id="KW-0028">Amino-acid biosynthesis</keyword>
<keyword id="KW-0032">Aminotransferase</keyword>
<keyword id="KW-0368">Histidine biosynthesis</keyword>
<keyword id="KW-0663">Pyridoxal phosphate</keyword>
<keyword id="KW-1185">Reference proteome</keyword>
<keyword id="KW-0808">Transferase</keyword>
<accession>Q5P791</accession>
<proteinExistence type="inferred from homology"/>
<gene>
    <name evidence="1" type="primary">hisC</name>
    <name type="ordered locus">AZOSEA06970</name>
    <name type="ORF">ebA1297</name>
</gene>
<name>HIS8_AROAE</name>
<protein>
    <recommendedName>
        <fullName evidence="1">Histidinol-phosphate aminotransferase</fullName>
        <ecNumber evidence="1">2.6.1.9</ecNumber>
    </recommendedName>
    <alternativeName>
        <fullName evidence="1">Imidazole acetol-phosphate transaminase</fullName>
    </alternativeName>
</protein>
<organism>
    <name type="scientific">Aromatoleum aromaticum (strain DSM 19018 / LMG 30748 / EbN1)</name>
    <name type="common">Azoarcus sp. (strain EbN1)</name>
    <dbReference type="NCBI Taxonomy" id="76114"/>
    <lineage>
        <taxon>Bacteria</taxon>
        <taxon>Pseudomonadati</taxon>
        <taxon>Pseudomonadota</taxon>
        <taxon>Betaproteobacteria</taxon>
        <taxon>Rhodocyclales</taxon>
        <taxon>Rhodocyclaceae</taxon>
        <taxon>Aromatoleum</taxon>
    </lineage>
</organism>
<sequence>MSQYWSAVVHGLTPYVPGEQPKLANLVKLNTNEHPYGPSPRALAAIRAEASDALRLYPDPHADRLKAAIATRFGVEPREVFVGNGSDEVLAHAFMALLKHERPLRFPDISYSFYPVYCGLYGIAFETVPLDDDFAIRPDDYLPHGSVAAGGIIFPNPNAPTGRLMPLSDIERIVAGNPQCVVVIDEAYVDFGGESAIPLVRHHPNLLVVQTLSKSRSLAGLRVGFAVGNPDLIEALDRVKDSFNSYPLDRLAIAGGVAAIEDEEHFQRTRMAVIATRERLSADLASLGFDVLPSAANFVFTRHPHRDAGELAAQLRRRAIIVRHFRQPRIEQFLRITVGTDEQCAALVEALRDILR</sequence>